<evidence type="ECO:0000250" key="1"/>
<evidence type="ECO:0000255" key="2">
    <source>
        <dbReference type="PROSITE-ProRule" id="PRU00686"/>
    </source>
</evidence>
<evidence type="ECO:0000305" key="3"/>
<accession>P0AC63</accession>
<accession>P37687</accession>
<gene>
    <name type="primary">grxC</name>
    <name type="ordered locus">c4433</name>
</gene>
<sequence>MANVEIYTKETCPYCHRAKALLSSKGVSFQELPIDGNAAKREEMIKRSGRTTVPQIFIDAQHIGGCDDLYALDARGGLDPLLK</sequence>
<feature type="initiator methionine" description="Removed" evidence="1">
    <location>
        <position position="1"/>
    </location>
</feature>
<feature type="chain" id="PRO_0000141590" description="Glutaredoxin 3">
    <location>
        <begin position="2"/>
        <end position="83"/>
    </location>
</feature>
<feature type="domain" description="Glutaredoxin" evidence="2">
    <location>
        <begin position="2"/>
        <end position="83"/>
    </location>
</feature>
<feature type="disulfide bond" description="Redox-active" evidence="1">
    <location>
        <begin position="12"/>
        <end position="15"/>
    </location>
</feature>
<organism>
    <name type="scientific">Escherichia coli O6:H1 (strain CFT073 / ATCC 700928 / UPEC)</name>
    <dbReference type="NCBI Taxonomy" id="199310"/>
    <lineage>
        <taxon>Bacteria</taxon>
        <taxon>Pseudomonadati</taxon>
        <taxon>Pseudomonadota</taxon>
        <taxon>Gammaproteobacteria</taxon>
        <taxon>Enterobacterales</taxon>
        <taxon>Enterobacteriaceae</taxon>
        <taxon>Escherichia</taxon>
    </lineage>
</organism>
<reference key="1">
    <citation type="journal article" date="2002" name="Proc. Natl. Acad. Sci. U.S.A.">
        <title>Extensive mosaic structure revealed by the complete genome sequence of uropathogenic Escherichia coli.</title>
        <authorList>
            <person name="Welch R.A."/>
            <person name="Burland V."/>
            <person name="Plunkett G. III"/>
            <person name="Redford P."/>
            <person name="Roesch P."/>
            <person name="Rasko D."/>
            <person name="Buckles E.L."/>
            <person name="Liou S.-R."/>
            <person name="Boutin A."/>
            <person name="Hackett J."/>
            <person name="Stroud D."/>
            <person name="Mayhew G.F."/>
            <person name="Rose D.J."/>
            <person name="Zhou S."/>
            <person name="Schwartz D.C."/>
            <person name="Perna N.T."/>
            <person name="Mobley H.L.T."/>
            <person name="Donnenberg M.S."/>
            <person name="Blattner F.R."/>
        </authorList>
    </citation>
    <scope>NUCLEOTIDE SEQUENCE [LARGE SCALE GENOMIC DNA]</scope>
    <source>
        <strain>CFT073 / ATCC 700928 / UPEC</strain>
    </source>
</reference>
<dbReference type="EMBL" id="AE014075">
    <property type="protein sequence ID" value="AAN82869.1"/>
    <property type="molecule type" value="Genomic_DNA"/>
</dbReference>
<dbReference type="RefSeq" id="WP_000024392.1">
    <property type="nucleotide sequence ID" value="NZ_CP051263.1"/>
</dbReference>
<dbReference type="BMRB" id="P0AC63"/>
<dbReference type="SMR" id="P0AC63"/>
<dbReference type="STRING" id="199310.c4433"/>
<dbReference type="GeneID" id="93778324"/>
<dbReference type="KEGG" id="ecc:c4433"/>
<dbReference type="eggNOG" id="COG0695">
    <property type="taxonomic scope" value="Bacteria"/>
</dbReference>
<dbReference type="HOGENOM" id="CLU_026126_7_3_6"/>
<dbReference type="BioCyc" id="ECOL199310:C4433-MONOMER"/>
<dbReference type="Proteomes" id="UP000001410">
    <property type="component" value="Chromosome"/>
</dbReference>
<dbReference type="GO" id="GO:0005737">
    <property type="term" value="C:cytoplasm"/>
    <property type="evidence" value="ECO:0007669"/>
    <property type="project" value="TreeGrafter"/>
</dbReference>
<dbReference type="GO" id="GO:0015038">
    <property type="term" value="F:glutathione disulfide oxidoreductase activity"/>
    <property type="evidence" value="ECO:0007669"/>
    <property type="project" value="TreeGrafter"/>
</dbReference>
<dbReference type="GO" id="GO:0045454">
    <property type="term" value="P:cell redox homeostasis"/>
    <property type="evidence" value="ECO:0007669"/>
    <property type="project" value="InterPro"/>
</dbReference>
<dbReference type="GO" id="GO:0034599">
    <property type="term" value="P:cellular response to oxidative stress"/>
    <property type="evidence" value="ECO:0007669"/>
    <property type="project" value="TreeGrafter"/>
</dbReference>
<dbReference type="GO" id="GO:0009263">
    <property type="term" value="P:deoxyribonucleotide biosynthetic process"/>
    <property type="evidence" value="ECO:0007669"/>
    <property type="project" value="UniProtKB-KW"/>
</dbReference>
<dbReference type="CDD" id="cd03418">
    <property type="entry name" value="GRX_GRXb_1_3_like"/>
    <property type="match status" value="1"/>
</dbReference>
<dbReference type="FunFam" id="3.40.30.10:FF:000018">
    <property type="entry name" value="Glutaredoxin"/>
    <property type="match status" value="1"/>
</dbReference>
<dbReference type="Gene3D" id="3.40.30.10">
    <property type="entry name" value="Glutaredoxin"/>
    <property type="match status" value="1"/>
</dbReference>
<dbReference type="InterPro" id="IPR011767">
    <property type="entry name" value="GLR_AS"/>
</dbReference>
<dbReference type="InterPro" id="IPR002109">
    <property type="entry name" value="Glutaredoxin"/>
</dbReference>
<dbReference type="InterPro" id="IPR014025">
    <property type="entry name" value="Glutaredoxin_subgr"/>
</dbReference>
<dbReference type="InterPro" id="IPR011900">
    <property type="entry name" value="GRX_bact"/>
</dbReference>
<dbReference type="InterPro" id="IPR036249">
    <property type="entry name" value="Thioredoxin-like_sf"/>
</dbReference>
<dbReference type="NCBIfam" id="TIGR02181">
    <property type="entry name" value="GRX_bact"/>
    <property type="match status" value="1"/>
</dbReference>
<dbReference type="NCBIfam" id="NF007923">
    <property type="entry name" value="PRK10638.1"/>
    <property type="match status" value="1"/>
</dbReference>
<dbReference type="PANTHER" id="PTHR45694">
    <property type="entry name" value="GLUTAREDOXIN 2"/>
    <property type="match status" value="1"/>
</dbReference>
<dbReference type="PANTHER" id="PTHR45694:SF18">
    <property type="entry name" value="GLUTAREDOXIN-1-RELATED"/>
    <property type="match status" value="1"/>
</dbReference>
<dbReference type="Pfam" id="PF00462">
    <property type="entry name" value="Glutaredoxin"/>
    <property type="match status" value="1"/>
</dbReference>
<dbReference type="PRINTS" id="PR00160">
    <property type="entry name" value="GLUTAREDOXIN"/>
</dbReference>
<dbReference type="SUPFAM" id="SSF52833">
    <property type="entry name" value="Thioredoxin-like"/>
    <property type="match status" value="1"/>
</dbReference>
<dbReference type="PROSITE" id="PS00195">
    <property type="entry name" value="GLUTAREDOXIN_1"/>
    <property type="match status" value="1"/>
</dbReference>
<dbReference type="PROSITE" id="PS51354">
    <property type="entry name" value="GLUTAREDOXIN_2"/>
    <property type="match status" value="1"/>
</dbReference>
<keyword id="KW-0215">Deoxyribonucleotide synthesis</keyword>
<keyword id="KW-1015">Disulfide bond</keyword>
<keyword id="KW-0249">Electron transport</keyword>
<keyword id="KW-0676">Redox-active center</keyword>
<keyword id="KW-1185">Reference proteome</keyword>
<keyword id="KW-0813">Transport</keyword>
<comment type="function">
    <text evidence="1">The disulfide bond functions as an electron carrier in the glutathione-dependent synthesis of deoxyribonucleotides by the enzyme ribonucleotide reductase. In addition, it is also involved in reducing some disulfides in a coupled system with glutathione reductase (By similarity).</text>
</comment>
<comment type="subunit">
    <text evidence="3">Monomer.</text>
</comment>
<comment type="similarity">
    <text evidence="3">Belongs to the glutaredoxin family.</text>
</comment>
<protein>
    <recommendedName>
        <fullName>Glutaredoxin 3</fullName>
        <shortName>Grx3</shortName>
    </recommendedName>
</protein>
<proteinExistence type="inferred from homology"/>
<name>GLRX3_ECOL6</name>